<feature type="propeptide" id="PRO_0000000694" description="Removed in mature form" evidence="1">
    <location>
        <begin position="1"/>
        <end position="2"/>
    </location>
</feature>
<feature type="chain" id="PRO_0000000695" description="Actin, cytoskeletal 1">
    <location>
        <begin position="3"/>
        <end position="376"/>
    </location>
</feature>
<feature type="modified residue" description="N-acetylaspartate" evidence="1">
    <location>
        <position position="3"/>
    </location>
</feature>
<accession>P53465</accession>
<proteinExistence type="evidence at transcript level"/>
<organism>
    <name type="scientific">Lytechinus pictus</name>
    <name type="common">Painted sea urchin</name>
    <dbReference type="NCBI Taxonomy" id="7653"/>
    <lineage>
        <taxon>Eukaryota</taxon>
        <taxon>Metazoa</taxon>
        <taxon>Echinodermata</taxon>
        <taxon>Eleutherozoa</taxon>
        <taxon>Echinozoa</taxon>
        <taxon>Echinoidea</taxon>
        <taxon>Euechinoidea</taxon>
        <taxon>Echinacea</taxon>
        <taxon>Temnopleuroida</taxon>
        <taxon>Toxopneustidae</taxon>
        <taxon>Lytechinus</taxon>
    </lineage>
</organism>
<sequence length="376" mass="41842">MCDDDIAALVIDNGSGMVKAGFAGDDAPRAVFPSIVGRPRHQGVMVGMGQKDSYVGGQAQSKRGILTLKYPIEHGIVTNWDDMEKIWHHTFYNELRVAPEEHPVLLTEAPLNPKANREKMTQIMFETFNSPAMYVAIQAVLSLYASGRTTGIVFDSGDGVSYTVPIYEGYALPHAILRLDLAGRDITDYLMKILTERGYTFTTTAEREIVRDIKEKLCYVALDFEQEMQTAASSSSLEKSYELPDGQVITIGNERFRCPEALFQPSFLGMESAGIHETCYNSIMKCDVDIRKDLYANTVLSGGSTMFPGIADRMQKEITALAPPTMKIKIIAPPERKYSVWIGGSILASLSTFQQMWISKQEYDESGPSIVHRKCF</sequence>
<dbReference type="EC" id="3.6.4.-" evidence="2"/>
<dbReference type="EMBL" id="U09651">
    <property type="protein sequence ID" value="AAA53363.1"/>
    <property type="molecule type" value="mRNA"/>
</dbReference>
<dbReference type="SMR" id="P53465"/>
<dbReference type="OrthoDB" id="10249208at2759"/>
<dbReference type="GO" id="GO:0005737">
    <property type="term" value="C:cytoplasm"/>
    <property type="evidence" value="ECO:0007669"/>
    <property type="project" value="UniProtKB-SubCell"/>
</dbReference>
<dbReference type="GO" id="GO:0005856">
    <property type="term" value="C:cytoskeleton"/>
    <property type="evidence" value="ECO:0007669"/>
    <property type="project" value="UniProtKB-SubCell"/>
</dbReference>
<dbReference type="GO" id="GO:0005524">
    <property type="term" value="F:ATP binding"/>
    <property type="evidence" value="ECO:0007669"/>
    <property type="project" value="UniProtKB-KW"/>
</dbReference>
<dbReference type="GO" id="GO:0016787">
    <property type="term" value="F:hydrolase activity"/>
    <property type="evidence" value="ECO:0007669"/>
    <property type="project" value="UniProtKB-KW"/>
</dbReference>
<dbReference type="CDD" id="cd10224">
    <property type="entry name" value="ASKHA_NBD_actin"/>
    <property type="match status" value="1"/>
</dbReference>
<dbReference type="FunFam" id="2.30.36.70:FF:000001">
    <property type="entry name" value="Actin, alpha skeletal muscle"/>
    <property type="match status" value="1"/>
</dbReference>
<dbReference type="FunFam" id="3.30.420.40:FF:000131">
    <property type="entry name" value="Actin, alpha skeletal muscle"/>
    <property type="match status" value="1"/>
</dbReference>
<dbReference type="FunFam" id="3.30.420.40:FF:000291">
    <property type="entry name" value="Actin, alpha skeletal muscle"/>
    <property type="match status" value="1"/>
</dbReference>
<dbReference type="FunFam" id="3.90.640.10:FF:000047">
    <property type="entry name" value="Actin, alpha skeletal muscle"/>
    <property type="match status" value="1"/>
</dbReference>
<dbReference type="FunFam" id="3.30.420.40:FF:000058">
    <property type="entry name" value="Putative actin-related protein 5"/>
    <property type="match status" value="1"/>
</dbReference>
<dbReference type="Gene3D" id="3.30.420.40">
    <property type="match status" value="2"/>
</dbReference>
<dbReference type="Gene3D" id="3.90.640.10">
    <property type="entry name" value="Actin, Chain A, domain 4"/>
    <property type="match status" value="1"/>
</dbReference>
<dbReference type="InterPro" id="IPR004000">
    <property type="entry name" value="Actin"/>
</dbReference>
<dbReference type="InterPro" id="IPR020902">
    <property type="entry name" value="Actin/actin-like_CS"/>
</dbReference>
<dbReference type="InterPro" id="IPR004001">
    <property type="entry name" value="Actin_CS"/>
</dbReference>
<dbReference type="InterPro" id="IPR043129">
    <property type="entry name" value="ATPase_NBD"/>
</dbReference>
<dbReference type="PANTHER" id="PTHR11937">
    <property type="entry name" value="ACTIN"/>
    <property type="match status" value="1"/>
</dbReference>
<dbReference type="Pfam" id="PF00022">
    <property type="entry name" value="Actin"/>
    <property type="match status" value="1"/>
</dbReference>
<dbReference type="PRINTS" id="PR00190">
    <property type="entry name" value="ACTIN"/>
</dbReference>
<dbReference type="SMART" id="SM00268">
    <property type="entry name" value="ACTIN"/>
    <property type="match status" value="1"/>
</dbReference>
<dbReference type="SUPFAM" id="SSF53067">
    <property type="entry name" value="Actin-like ATPase domain"/>
    <property type="match status" value="2"/>
</dbReference>
<dbReference type="PROSITE" id="PS00432">
    <property type="entry name" value="ACTINS_2"/>
    <property type="match status" value="1"/>
</dbReference>
<dbReference type="PROSITE" id="PS01132">
    <property type="entry name" value="ACTINS_ACT_LIKE"/>
    <property type="match status" value="1"/>
</dbReference>
<reference key="1">
    <citation type="journal article" date="1994" name="J. Mol. Evol.">
        <title>Evolution of actin gene families of sea urchins.</title>
        <authorList>
            <person name="Fang H."/>
            <person name="Brandhorst B.P."/>
        </authorList>
    </citation>
    <scope>NUCLEOTIDE SEQUENCE [MRNA]</scope>
</reference>
<comment type="function">
    <text>Actins are highly conserved proteins that are involved in various types of cell motility and are ubiquitously expressed in all eukaryotic cells.</text>
</comment>
<comment type="catalytic activity">
    <reaction evidence="2">
        <text>ATP + H2O = ADP + phosphate + H(+)</text>
        <dbReference type="Rhea" id="RHEA:13065"/>
        <dbReference type="ChEBI" id="CHEBI:15377"/>
        <dbReference type="ChEBI" id="CHEBI:15378"/>
        <dbReference type="ChEBI" id="CHEBI:30616"/>
        <dbReference type="ChEBI" id="CHEBI:43474"/>
        <dbReference type="ChEBI" id="CHEBI:456216"/>
    </reaction>
</comment>
<comment type="subcellular location">
    <subcellularLocation>
        <location>Cytoplasm</location>
    </subcellularLocation>
    <subcellularLocation>
        <location>Cytoplasm</location>
        <location>Cytoskeleton</location>
    </subcellularLocation>
</comment>
<comment type="tissue specificity">
    <text>Expressed in several different spatial territories of the embryo.</text>
</comment>
<comment type="similarity">
    <text evidence="3">Belongs to the actin family.</text>
</comment>
<keyword id="KW-0007">Acetylation</keyword>
<keyword id="KW-0067">ATP-binding</keyword>
<keyword id="KW-0963">Cytoplasm</keyword>
<keyword id="KW-0206">Cytoskeleton</keyword>
<keyword id="KW-0378">Hydrolase</keyword>
<keyword id="KW-0547">Nucleotide-binding</keyword>
<protein>
    <recommendedName>
        <fullName>Actin, cytoskeletal 1</fullName>
        <ecNumber evidence="2">3.6.4.-</ecNumber>
    </recommendedName>
    <alternativeName>
        <fullName>LPC1</fullName>
    </alternativeName>
</protein>
<name>ACT1_LYTPI</name>
<evidence type="ECO:0000250" key="1"/>
<evidence type="ECO:0000250" key="2">
    <source>
        <dbReference type="UniProtKB" id="P68137"/>
    </source>
</evidence>
<evidence type="ECO:0000305" key="3"/>